<comment type="function">
    <text evidence="1">One of the early assembly proteins it binds 23S rRNA. One of the proteins that surrounds the polypeptide exit tunnel on the outside of the ribosome. Forms the main docking site for trigger factor binding to the ribosome.</text>
</comment>
<comment type="subunit">
    <text evidence="1">Part of the 50S ribosomal subunit. Contacts protein L29, and trigger factor when it is bound to the ribosome.</text>
</comment>
<comment type="similarity">
    <text evidence="1">Belongs to the universal ribosomal protein uL23 family.</text>
</comment>
<reference key="1">
    <citation type="journal article" date="2010" name="Genome Biol.">
        <title>Structure and dynamics of the pan-genome of Streptococcus pneumoniae and closely related species.</title>
        <authorList>
            <person name="Donati C."/>
            <person name="Hiller N.L."/>
            <person name="Tettelin H."/>
            <person name="Muzzi A."/>
            <person name="Croucher N.J."/>
            <person name="Angiuoli S.V."/>
            <person name="Oggioni M."/>
            <person name="Dunning Hotopp J.C."/>
            <person name="Hu F.Z."/>
            <person name="Riley D.R."/>
            <person name="Covacci A."/>
            <person name="Mitchell T.J."/>
            <person name="Bentley S.D."/>
            <person name="Kilian M."/>
            <person name="Ehrlich G.D."/>
            <person name="Rappuoli R."/>
            <person name="Moxon E.R."/>
            <person name="Masignani V."/>
        </authorList>
    </citation>
    <scope>NUCLEOTIDE SEQUENCE [LARGE SCALE GENOMIC DNA]</scope>
    <source>
        <strain>Taiwan19F-14</strain>
    </source>
</reference>
<proteinExistence type="inferred from homology"/>
<name>RL23_STRZT</name>
<protein>
    <recommendedName>
        <fullName evidence="1">Large ribosomal subunit protein uL23</fullName>
    </recommendedName>
    <alternativeName>
        <fullName evidence="2">50S ribosomal protein L23</fullName>
    </alternativeName>
</protein>
<accession>C1CP90</accession>
<keyword id="KW-0687">Ribonucleoprotein</keyword>
<keyword id="KW-0689">Ribosomal protein</keyword>
<keyword id="KW-0694">RNA-binding</keyword>
<keyword id="KW-0699">rRNA-binding</keyword>
<feature type="chain" id="PRO_1000184110" description="Large ribosomal subunit protein uL23">
    <location>
        <begin position="1"/>
        <end position="98"/>
    </location>
</feature>
<organism>
    <name type="scientific">Streptococcus pneumoniae (strain Taiwan19F-14)</name>
    <dbReference type="NCBI Taxonomy" id="487213"/>
    <lineage>
        <taxon>Bacteria</taxon>
        <taxon>Bacillati</taxon>
        <taxon>Bacillota</taxon>
        <taxon>Bacilli</taxon>
        <taxon>Lactobacillales</taxon>
        <taxon>Streptococcaceae</taxon>
        <taxon>Streptococcus</taxon>
    </lineage>
</organism>
<dbReference type="EMBL" id="CP000921">
    <property type="protein sequence ID" value="ACO23738.1"/>
    <property type="molecule type" value="Genomic_DNA"/>
</dbReference>
<dbReference type="RefSeq" id="WP_001055347.1">
    <property type="nucleotide sequence ID" value="NC_012469.1"/>
</dbReference>
<dbReference type="SMR" id="C1CP90"/>
<dbReference type="KEGG" id="snt:SPT_0258"/>
<dbReference type="HOGENOM" id="CLU_037562_3_2_9"/>
<dbReference type="GO" id="GO:1990904">
    <property type="term" value="C:ribonucleoprotein complex"/>
    <property type="evidence" value="ECO:0007669"/>
    <property type="project" value="UniProtKB-KW"/>
</dbReference>
<dbReference type="GO" id="GO:0005840">
    <property type="term" value="C:ribosome"/>
    <property type="evidence" value="ECO:0007669"/>
    <property type="project" value="UniProtKB-KW"/>
</dbReference>
<dbReference type="GO" id="GO:0019843">
    <property type="term" value="F:rRNA binding"/>
    <property type="evidence" value="ECO:0007669"/>
    <property type="project" value="UniProtKB-UniRule"/>
</dbReference>
<dbReference type="GO" id="GO:0003735">
    <property type="term" value="F:structural constituent of ribosome"/>
    <property type="evidence" value="ECO:0007669"/>
    <property type="project" value="InterPro"/>
</dbReference>
<dbReference type="GO" id="GO:0006412">
    <property type="term" value="P:translation"/>
    <property type="evidence" value="ECO:0007669"/>
    <property type="project" value="UniProtKB-UniRule"/>
</dbReference>
<dbReference type="FunFam" id="3.30.70.330:FF:000001">
    <property type="entry name" value="50S ribosomal protein L23"/>
    <property type="match status" value="1"/>
</dbReference>
<dbReference type="Gene3D" id="3.30.70.330">
    <property type="match status" value="1"/>
</dbReference>
<dbReference type="HAMAP" id="MF_01369_B">
    <property type="entry name" value="Ribosomal_uL23_B"/>
    <property type="match status" value="1"/>
</dbReference>
<dbReference type="InterPro" id="IPR012677">
    <property type="entry name" value="Nucleotide-bd_a/b_plait_sf"/>
</dbReference>
<dbReference type="InterPro" id="IPR013025">
    <property type="entry name" value="Ribosomal_uL23-like"/>
</dbReference>
<dbReference type="InterPro" id="IPR012678">
    <property type="entry name" value="Ribosomal_uL23/eL15/eS24_sf"/>
</dbReference>
<dbReference type="InterPro" id="IPR001014">
    <property type="entry name" value="Ribosomal_uL23_CS"/>
</dbReference>
<dbReference type="NCBIfam" id="NF004361">
    <property type="entry name" value="PRK05738.2-1"/>
    <property type="match status" value="1"/>
</dbReference>
<dbReference type="NCBIfam" id="NF004363">
    <property type="entry name" value="PRK05738.2-4"/>
    <property type="match status" value="1"/>
</dbReference>
<dbReference type="PANTHER" id="PTHR11620">
    <property type="entry name" value="60S RIBOSOMAL PROTEIN L23A"/>
    <property type="match status" value="1"/>
</dbReference>
<dbReference type="Pfam" id="PF00276">
    <property type="entry name" value="Ribosomal_L23"/>
    <property type="match status" value="1"/>
</dbReference>
<dbReference type="SUPFAM" id="SSF54189">
    <property type="entry name" value="Ribosomal proteins S24e, L23 and L15e"/>
    <property type="match status" value="1"/>
</dbReference>
<dbReference type="PROSITE" id="PS00050">
    <property type="entry name" value="RIBOSOMAL_L23"/>
    <property type="match status" value="1"/>
</dbReference>
<evidence type="ECO:0000255" key="1">
    <source>
        <dbReference type="HAMAP-Rule" id="MF_01369"/>
    </source>
</evidence>
<evidence type="ECO:0000305" key="2"/>
<gene>
    <name evidence="1" type="primary">rplW</name>
    <name type="ordered locus">SPT_0258</name>
</gene>
<sequence length="98" mass="10786">MNLYDVIKKPVITESSMAQLEAGKYVFEVDTRAHKLLIKQAVEAAFEGVKVANVNTINVKPKAKRVGRYTGFTNKTKKAIITLTADSKAIELFAAEAE</sequence>